<keyword id="KW-0007">Acetylation</keyword>
<keyword id="KW-0158">Chromosome</keyword>
<keyword id="KW-0238">DNA-binding</keyword>
<keyword id="KW-1017">Isopeptide bond</keyword>
<keyword id="KW-0544">Nucleosome core</keyword>
<keyword id="KW-0539">Nucleus</keyword>
<keyword id="KW-0832">Ubl conjugation</keyword>
<dbReference type="EMBL" id="AC134242">
    <property type="status" value="NOT_ANNOTATED_CDS"/>
    <property type="molecule type" value="Genomic_DNA"/>
</dbReference>
<dbReference type="EMBL" id="AC146745">
    <property type="status" value="NOT_ANNOTATED_CDS"/>
    <property type="molecule type" value="Genomic_DNA"/>
</dbReference>
<dbReference type="RefSeq" id="NP_001411956.1">
    <property type="nucleotide sequence ID" value="NM_001425027.1"/>
</dbReference>
<dbReference type="RefSeq" id="XP_003606924.2">
    <property type="nucleotide sequence ID" value="XM_003606876.2"/>
</dbReference>
<dbReference type="RefSeq" id="XP_003607010.1">
    <property type="nucleotide sequence ID" value="XM_003606962.4"/>
</dbReference>
<dbReference type="SMR" id="Q1S9I9"/>
<dbReference type="PaxDb" id="3880-AES89207"/>
<dbReference type="ProMEX" id="Q1S9I9"/>
<dbReference type="EnsemblPlants" id="rna23741">
    <property type="protein sequence ID" value="RHN61293.1"/>
    <property type="gene ID" value="gene23741"/>
</dbReference>
<dbReference type="EnsemblPlants" id="rna23800">
    <property type="protein sequence ID" value="RHN61345.1"/>
    <property type="gene ID" value="gene23800"/>
</dbReference>
<dbReference type="GeneID" id="11417139"/>
<dbReference type="GeneID" id="11442767"/>
<dbReference type="Gramene" id="rna23741">
    <property type="protein sequence ID" value="RHN61293.1"/>
    <property type="gene ID" value="gene23741"/>
</dbReference>
<dbReference type="Gramene" id="rna23800">
    <property type="protein sequence ID" value="RHN61345.1"/>
    <property type="gene ID" value="gene23800"/>
</dbReference>
<dbReference type="KEGG" id="mtr:11417139"/>
<dbReference type="KEGG" id="mtr:11442767"/>
<dbReference type="eggNOG" id="KOG1744">
    <property type="taxonomic scope" value="Eukaryota"/>
</dbReference>
<dbReference type="HOGENOM" id="CLU_075666_1_3_1"/>
<dbReference type="OMA" id="LLXGELA"/>
<dbReference type="OrthoDB" id="1421343at2759"/>
<dbReference type="ExpressionAtlas" id="Q1S9I9">
    <property type="expression patterns" value="differential"/>
</dbReference>
<dbReference type="GO" id="GO:0000786">
    <property type="term" value="C:nucleosome"/>
    <property type="evidence" value="ECO:0007669"/>
    <property type="project" value="UniProtKB-KW"/>
</dbReference>
<dbReference type="GO" id="GO:0005634">
    <property type="term" value="C:nucleus"/>
    <property type="evidence" value="ECO:0007669"/>
    <property type="project" value="UniProtKB-SubCell"/>
</dbReference>
<dbReference type="GO" id="GO:0003677">
    <property type="term" value="F:DNA binding"/>
    <property type="evidence" value="ECO:0007669"/>
    <property type="project" value="UniProtKB-KW"/>
</dbReference>
<dbReference type="GO" id="GO:0046982">
    <property type="term" value="F:protein heterodimerization activity"/>
    <property type="evidence" value="ECO:0007669"/>
    <property type="project" value="InterPro"/>
</dbReference>
<dbReference type="GO" id="GO:0030527">
    <property type="term" value="F:structural constituent of chromatin"/>
    <property type="evidence" value="ECO:0007669"/>
    <property type="project" value="InterPro"/>
</dbReference>
<dbReference type="CDD" id="cd22910">
    <property type="entry name" value="HFD_H2B"/>
    <property type="match status" value="1"/>
</dbReference>
<dbReference type="FunFam" id="1.10.20.10:FF:000014">
    <property type="entry name" value="Histone H2B"/>
    <property type="match status" value="1"/>
</dbReference>
<dbReference type="Gene3D" id="1.10.20.10">
    <property type="entry name" value="Histone, subunit A"/>
    <property type="match status" value="1"/>
</dbReference>
<dbReference type="InterPro" id="IPR009072">
    <property type="entry name" value="Histone-fold"/>
</dbReference>
<dbReference type="InterPro" id="IPR007125">
    <property type="entry name" value="Histone_H2A/H2B/H3"/>
</dbReference>
<dbReference type="InterPro" id="IPR000558">
    <property type="entry name" value="Histone_H2B"/>
</dbReference>
<dbReference type="InterPro" id="IPR055333">
    <property type="entry name" value="HISTONE_H2B_site"/>
</dbReference>
<dbReference type="PANTHER" id="PTHR23428">
    <property type="entry name" value="HISTONE H2B"/>
    <property type="match status" value="1"/>
</dbReference>
<dbReference type="Pfam" id="PF00125">
    <property type="entry name" value="Histone"/>
    <property type="match status" value="1"/>
</dbReference>
<dbReference type="PRINTS" id="PR00621">
    <property type="entry name" value="HISTONEH2B"/>
</dbReference>
<dbReference type="SMART" id="SM00427">
    <property type="entry name" value="H2B"/>
    <property type="match status" value="1"/>
</dbReference>
<dbReference type="SUPFAM" id="SSF47113">
    <property type="entry name" value="Histone-fold"/>
    <property type="match status" value="1"/>
</dbReference>
<dbReference type="PROSITE" id="PS00357">
    <property type="entry name" value="HISTONE_H2B"/>
    <property type="match status" value="1"/>
</dbReference>
<protein>
    <recommendedName>
        <fullName>Probable histone H2B.1</fullName>
    </recommendedName>
</protein>
<evidence type="ECO:0000250" key="1"/>
<evidence type="ECO:0000256" key="2">
    <source>
        <dbReference type="SAM" id="MobiDB-lite"/>
    </source>
</evidence>
<evidence type="ECO:0000305" key="3"/>
<feature type="initiator methionine" description="Removed" evidence="1">
    <location>
        <position position="1"/>
    </location>
</feature>
<feature type="chain" id="PRO_0000240000" description="Probable histone H2B.1">
    <location>
        <begin position="2"/>
        <end position="148"/>
    </location>
</feature>
<feature type="region of interest" description="Disordered" evidence="2">
    <location>
        <begin position="1"/>
        <end position="57"/>
    </location>
</feature>
<feature type="compositionally biased region" description="Basic and acidic residues" evidence="2">
    <location>
        <begin position="1"/>
        <end position="32"/>
    </location>
</feature>
<feature type="modified residue" description="N6-acetyllysine" evidence="1">
    <location>
        <position position="7"/>
    </location>
</feature>
<feature type="modified residue" description="N6-acetyllysine" evidence="1">
    <location>
        <position position="36"/>
    </location>
</feature>
<feature type="modified residue" description="N6-acetyllysine" evidence="1">
    <location>
        <position position="37"/>
    </location>
</feature>
<feature type="cross-link" description="Glycyl lysine isopeptide (Lys-Gly) (interchain with G-Cter in ubiquitin)" evidence="1">
    <location>
        <position position="144"/>
    </location>
</feature>
<name>H2B1_MEDTR</name>
<reference key="1">
    <citation type="submission" date="2006-04" db="EMBL/GenBank/DDBJ databases">
        <authorList>
            <consortium name="The international Medicago genome annotation group"/>
        </authorList>
    </citation>
    <scope>NUCLEOTIDE SEQUENCE [LARGE SCALE GENOMIC DNA]</scope>
</reference>
<accession>Q1S9I9</accession>
<organism>
    <name type="scientific">Medicago truncatula</name>
    <name type="common">Barrel medic</name>
    <name type="synonym">Medicago tribuloides</name>
    <dbReference type="NCBI Taxonomy" id="3880"/>
    <lineage>
        <taxon>Eukaryota</taxon>
        <taxon>Viridiplantae</taxon>
        <taxon>Streptophyta</taxon>
        <taxon>Embryophyta</taxon>
        <taxon>Tracheophyta</taxon>
        <taxon>Spermatophyta</taxon>
        <taxon>Magnoliopsida</taxon>
        <taxon>eudicotyledons</taxon>
        <taxon>Gunneridae</taxon>
        <taxon>Pentapetalae</taxon>
        <taxon>rosids</taxon>
        <taxon>fabids</taxon>
        <taxon>Fabales</taxon>
        <taxon>Fabaceae</taxon>
        <taxon>Papilionoideae</taxon>
        <taxon>50 kb inversion clade</taxon>
        <taxon>NPAAA clade</taxon>
        <taxon>Hologalegina</taxon>
        <taxon>IRL clade</taxon>
        <taxon>Trifolieae</taxon>
        <taxon>Medicago</taxon>
    </lineage>
</organism>
<comment type="function">
    <text>Core component of nucleosome. Nucleosomes wrap and compact DNA into chromatin, limiting DNA accessibility to the cellular machineries which require DNA as a template. Histones thereby play a central role in transcription regulation, DNA repair, DNA replication and chromosomal stability. DNA accessibility is regulated via a complex set of post-translational modifications of histones, also called histone code, and nucleosome remodeling.</text>
</comment>
<comment type="subunit">
    <text>The nucleosome is a histone octamer containing two molecules each of H2A, H2B, H3 and H4 assembled in one H3-H4 heterotetramer and two H2A-H2B heterodimers. The octamer wraps approximately 147 bp of DNA.</text>
</comment>
<comment type="subcellular location">
    <subcellularLocation>
        <location evidence="1">Nucleus</location>
    </subcellularLocation>
    <subcellularLocation>
        <location evidence="1">Chromosome</location>
    </subcellularLocation>
</comment>
<comment type="PTM">
    <text evidence="1">Can be acetylated to form H2BK6ac, H2BK33ac and H2BK34ac.</text>
</comment>
<comment type="PTM">
    <text evidence="1">Monoubiquitinated to form H2BK143ub1; may give a specific tag for epigenetic transcriptional activation.</text>
</comment>
<comment type="similarity">
    <text evidence="3">Belongs to the histone H2B family.</text>
</comment>
<comment type="caution">
    <text evidence="3">To ensure consistency between histone entries, we follow the 'Brno' nomenclature for histone modifications, with positions referring to those used in the literature for the 'closest' model organism. Due to slight variations in histone sequences between organisms and to the presence of initiator methionine in UniProtKB/Swiss-Prot sequences, the actual positions of modified amino acids in the sequence generally differ. In this entry the following conventions are used: H2BK6ac = acetylated Lys-7; H2BK33ac = acetylated Lys-36; H2BK34ac = acetylated Lys-37; H2BK143ub1 = monoubiquitinated Lys-144.</text>
</comment>
<sequence length="148" mass="16224">MAPKGEKKPAEKKPAEEKKSTVAEKAPAEKKPKAGKKLPKEGGSAAGEKKKKRSKKSVETYKIYIFKVLKQVHPDIGISSKAMGIMNSFINDIFEKLAQESSRLARYNKKPTITSREIQTAVRLVLPGELAKHAVSEGTKAVTKFTSS</sequence>
<proteinExistence type="inferred from homology"/>